<evidence type="ECO:0000250" key="1">
    <source>
        <dbReference type="UniProtKB" id="P00900"/>
    </source>
</evidence>
<evidence type="ECO:0000255" key="2">
    <source>
        <dbReference type="PROSITE-ProRule" id="PRU00605"/>
    </source>
</evidence>
<evidence type="ECO:0000269" key="3">
    <source>
    </source>
</evidence>
<evidence type="ECO:0000305" key="4"/>
<evidence type="ECO:0000305" key="5">
    <source>
    </source>
</evidence>
<evidence type="ECO:0007829" key="6">
    <source>
        <dbReference type="PDB" id="1QDL"/>
    </source>
</evidence>
<protein>
    <recommendedName>
        <fullName>Anthranilate synthase component 2</fullName>
        <shortName>AS</shortName>
        <shortName>ASII</shortName>
        <ecNumber>4.1.3.27</ecNumber>
    </recommendedName>
    <alternativeName>
        <fullName>Anthranilate synthase, GATase component</fullName>
    </alternativeName>
    <alternativeName>
        <fullName>Anthranilate synthase, glutamine amidotransferase component</fullName>
    </alternativeName>
</protein>
<comment type="function">
    <text evidence="5">Part of a heterotetrameric complex that catalyzes the two-step biosynthesis of anthranilate, an intermediate in the biosynthesis of L-tryptophan. In the first step, the glutamine-binding beta subunit (TrpG) of anthranilate synthase (AS) provides the glutamine amidotransferase activity which generates ammonia as a substrate that, along with chorismate, is used in the second step, catalyzed by the large alpha subunit of AS (TrpE) to produce anthranilate. In the absence of TrpG, TrpE can synthesize anthranilate directly from chorismate and high concentrations of ammonia (Probable).</text>
</comment>
<comment type="catalytic activity">
    <reaction>
        <text>chorismate + L-glutamine = anthranilate + pyruvate + L-glutamate + H(+)</text>
        <dbReference type="Rhea" id="RHEA:21732"/>
        <dbReference type="ChEBI" id="CHEBI:15361"/>
        <dbReference type="ChEBI" id="CHEBI:15378"/>
        <dbReference type="ChEBI" id="CHEBI:16567"/>
        <dbReference type="ChEBI" id="CHEBI:29748"/>
        <dbReference type="ChEBI" id="CHEBI:29985"/>
        <dbReference type="ChEBI" id="CHEBI:58359"/>
        <dbReference type="EC" id="4.1.3.27"/>
    </reaction>
</comment>
<comment type="pathway">
    <text>Amino-acid biosynthesis; L-tryptophan biosynthesis; L-tryptophan from chorismate: step 1/5.</text>
</comment>
<comment type="subunit">
    <text evidence="3">Heterotetramer consisting of two non-identical subunits: a beta subunit (TrpG) and a large alpha subunit (TrpE).</text>
</comment>
<dbReference type="EC" id="4.1.3.27"/>
<dbReference type="EMBL" id="M98048">
    <property type="protein sequence ID" value="AAA73380.1"/>
    <property type="molecule type" value="Genomic_DNA"/>
</dbReference>
<dbReference type="EMBL" id="Z50014">
    <property type="protein sequence ID" value="CAA90312.1"/>
    <property type="molecule type" value="Genomic_DNA"/>
</dbReference>
<dbReference type="EMBL" id="AE006641">
    <property type="protein sequence ID" value="AAK41176.1"/>
    <property type="molecule type" value="Genomic_DNA"/>
</dbReference>
<dbReference type="PIR" id="A99240">
    <property type="entry name" value="A99240"/>
</dbReference>
<dbReference type="PIR" id="B40635">
    <property type="entry name" value="B40635"/>
</dbReference>
<dbReference type="RefSeq" id="WP_009992310.1">
    <property type="nucleotide sequence ID" value="NC_002754.1"/>
</dbReference>
<dbReference type="PDB" id="1QDL">
    <property type="method" value="X-ray"/>
    <property type="resolution" value="2.50 A"/>
    <property type="chains" value="B=1-195"/>
</dbReference>
<dbReference type="PDBsum" id="1QDL"/>
<dbReference type="SMR" id="Q06129"/>
<dbReference type="DIP" id="DIP-6203N"/>
<dbReference type="FunCoup" id="Q06129">
    <property type="interactions" value="127"/>
</dbReference>
<dbReference type="IntAct" id="Q06129">
    <property type="interactions" value="1"/>
</dbReference>
<dbReference type="MINT" id="Q06129"/>
<dbReference type="STRING" id="273057.SSO0894"/>
<dbReference type="PaxDb" id="273057-SSO0894"/>
<dbReference type="EnsemblBacteria" id="AAK41176">
    <property type="protein sequence ID" value="AAK41176"/>
    <property type="gene ID" value="SSO0894"/>
</dbReference>
<dbReference type="KEGG" id="sso:SSO0894"/>
<dbReference type="PATRIC" id="fig|273057.12.peg.897"/>
<dbReference type="eggNOG" id="arCOG00086">
    <property type="taxonomic scope" value="Archaea"/>
</dbReference>
<dbReference type="HOGENOM" id="CLU_014340_1_3_2"/>
<dbReference type="InParanoid" id="Q06129"/>
<dbReference type="PhylomeDB" id="Q06129"/>
<dbReference type="BioCyc" id="MetaCyc:MONOMER-3604"/>
<dbReference type="BRENDA" id="4.1.3.27">
    <property type="organism ID" value="6163"/>
</dbReference>
<dbReference type="UniPathway" id="UPA00035">
    <property type="reaction ID" value="UER00040"/>
</dbReference>
<dbReference type="EvolutionaryTrace" id="Q06129"/>
<dbReference type="Proteomes" id="UP000001974">
    <property type="component" value="Chromosome"/>
</dbReference>
<dbReference type="GO" id="GO:0004049">
    <property type="term" value="F:anthranilate synthase activity"/>
    <property type="evidence" value="ECO:0007669"/>
    <property type="project" value="UniProtKB-EC"/>
</dbReference>
<dbReference type="GO" id="GO:0000162">
    <property type="term" value="P:L-tryptophan biosynthetic process"/>
    <property type="evidence" value="ECO:0000318"/>
    <property type="project" value="GO_Central"/>
</dbReference>
<dbReference type="CDD" id="cd01743">
    <property type="entry name" value="GATase1_Anthranilate_Synthase"/>
    <property type="match status" value="1"/>
</dbReference>
<dbReference type="FunFam" id="3.40.50.880:FF:000003">
    <property type="entry name" value="Anthranilate synthase component II"/>
    <property type="match status" value="1"/>
</dbReference>
<dbReference type="Gene3D" id="3.40.50.880">
    <property type="match status" value="1"/>
</dbReference>
<dbReference type="InterPro" id="IPR050472">
    <property type="entry name" value="Anth_synth/Amidotransfase"/>
</dbReference>
<dbReference type="InterPro" id="IPR029062">
    <property type="entry name" value="Class_I_gatase-like"/>
</dbReference>
<dbReference type="InterPro" id="IPR017926">
    <property type="entry name" value="GATASE"/>
</dbReference>
<dbReference type="InterPro" id="IPR006221">
    <property type="entry name" value="TrpG/PapA_dom"/>
</dbReference>
<dbReference type="NCBIfam" id="TIGR00566">
    <property type="entry name" value="trpG_papA"/>
    <property type="match status" value="1"/>
</dbReference>
<dbReference type="PANTHER" id="PTHR43418:SF4">
    <property type="entry name" value="MULTIFUNCTIONAL TRYPTOPHAN BIOSYNTHESIS PROTEIN"/>
    <property type="match status" value="1"/>
</dbReference>
<dbReference type="PANTHER" id="PTHR43418">
    <property type="entry name" value="MULTIFUNCTIONAL TRYPTOPHAN BIOSYNTHESIS PROTEIN-RELATED"/>
    <property type="match status" value="1"/>
</dbReference>
<dbReference type="Pfam" id="PF00117">
    <property type="entry name" value="GATase"/>
    <property type="match status" value="1"/>
</dbReference>
<dbReference type="PRINTS" id="PR00097">
    <property type="entry name" value="ANTSNTHASEII"/>
</dbReference>
<dbReference type="PRINTS" id="PR00099">
    <property type="entry name" value="CPSGATASE"/>
</dbReference>
<dbReference type="PRINTS" id="PR00096">
    <property type="entry name" value="GATASE"/>
</dbReference>
<dbReference type="SUPFAM" id="SSF52317">
    <property type="entry name" value="Class I glutamine amidotransferase-like"/>
    <property type="match status" value="1"/>
</dbReference>
<dbReference type="PROSITE" id="PS51273">
    <property type="entry name" value="GATASE_TYPE_1"/>
    <property type="match status" value="1"/>
</dbReference>
<accession>Q06129</accession>
<gene>
    <name type="primary">trpG</name>
    <name type="ordered locus">SSO0894</name>
</gene>
<reference key="1">
    <citation type="journal article" date="1993" name="J. Bacteriol.">
        <title>Tryptophan biosynthesis genes trpEGC in the thermoacidophilic archaebacterium Sulfolobus solfataricus.</title>
        <authorList>
            <person name="Tutino M.L."/>
            <person name="Scarano G."/>
            <person name="Marino G."/>
            <person name="Sannia G."/>
            <person name="Cubellis M.V."/>
        </authorList>
    </citation>
    <scope>NUCLEOTIDE SEQUENCE [GENOMIC DNA]</scope>
    <source>
        <strain>DSM 5833 / MT-4</strain>
    </source>
</reference>
<reference key="2">
    <citation type="journal article" date="2001" name="Proc. Natl. Acad. Sci. U.S.A.">
        <title>The complete genome of the crenarchaeon Sulfolobus solfataricus P2.</title>
        <authorList>
            <person name="She Q."/>
            <person name="Singh R.K."/>
            <person name="Confalonieri F."/>
            <person name="Zivanovic Y."/>
            <person name="Allard G."/>
            <person name="Awayez M.J."/>
            <person name="Chan-Weiher C.C.-Y."/>
            <person name="Clausen I.G."/>
            <person name="Curtis B.A."/>
            <person name="De Moors A."/>
            <person name="Erauso G."/>
            <person name="Fletcher C."/>
            <person name="Gordon P.M.K."/>
            <person name="Heikamp-de Jong I."/>
            <person name="Jeffries A.C."/>
            <person name="Kozera C.J."/>
            <person name="Medina N."/>
            <person name="Peng X."/>
            <person name="Thi-Ngoc H.P."/>
            <person name="Redder P."/>
            <person name="Schenk M.E."/>
            <person name="Theriault C."/>
            <person name="Tolstrup N."/>
            <person name="Charlebois R.L."/>
            <person name="Doolittle W.F."/>
            <person name="Duguet M."/>
            <person name="Gaasterland T."/>
            <person name="Garrett R.A."/>
            <person name="Ragan M.A."/>
            <person name="Sensen C.W."/>
            <person name="Van der Oost J."/>
        </authorList>
    </citation>
    <scope>NUCLEOTIDE SEQUENCE [LARGE SCALE GENOMIC DNA]</scope>
    <source>
        <strain>ATCC 35092 / DSM 1617 / JCM 11322 / P2</strain>
    </source>
</reference>
<reference key="3">
    <citation type="journal article" date="1999" name="Proc. Natl. Acad. Sci. U.S.A.">
        <title>The crystal structure of anthranilate synthase from Sulfolobus solfataricus: functional implications.</title>
        <authorList>
            <person name="Knoechel T."/>
            <person name="Ivens A."/>
            <person name="Hester G."/>
            <person name="Gonzalez A."/>
            <person name="Bauerle R."/>
            <person name="Wilmanns M."/>
            <person name="Kirschner K."/>
            <person name="Jansonius J.N."/>
        </authorList>
    </citation>
    <scope>X-RAY CRYSTALLOGRAPHY (2.5 ANGSTROMS)</scope>
    <scope>FUNCTION</scope>
    <scope>SUBUNIT</scope>
</reference>
<organism>
    <name type="scientific">Saccharolobus solfataricus (strain ATCC 35092 / DSM 1617 / JCM 11322 / P2)</name>
    <name type="common">Sulfolobus solfataricus</name>
    <dbReference type="NCBI Taxonomy" id="273057"/>
    <lineage>
        <taxon>Archaea</taxon>
        <taxon>Thermoproteota</taxon>
        <taxon>Thermoprotei</taxon>
        <taxon>Sulfolobales</taxon>
        <taxon>Sulfolobaceae</taxon>
        <taxon>Saccharolobus</taxon>
    </lineage>
</organism>
<name>TRPG_SACS2</name>
<feature type="chain" id="PRO_0000056900" description="Anthranilate synthase component 2">
    <location>
        <begin position="1"/>
        <end position="195"/>
    </location>
</feature>
<feature type="domain" description="Glutamine amidotransferase type-1" evidence="2">
    <location>
        <begin position="3"/>
        <end position="195"/>
    </location>
</feature>
<feature type="active site" description="Nucleophile; for GATase activity" evidence="2">
    <location>
        <position position="84"/>
    </location>
</feature>
<feature type="active site" description="For GATase activity" evidence="2">
    <location>
        <position position="175"/>
    </location>
</feature>
<feature type="active site" description="For GATase activity" evidence="2">
    <location>
        <position position="177"/>
    </location>
</feature>
<feature type="binding site" evidence="1">
    <location>
        <begin position="54"/>
        <end position="56"/>
    </location>
    <ligand>
        <name>L-glutamine</name>
        <dbReference type="ChEBI" id="CHEBI:58359"/>
    </ligand>
</feature>
<feature type="binding site" evidence="1">
    <location>
        <position position="88"/>
    </location>
    <ligand>
        <name>L-glutamine</name>
        <dbReference type="ChEBI" id="CHEBI:58359"/>
    </ligand>
</feature>
<feature type="binding site" evidence="1">
    <location>
        <begin position="137"/>
        <end position="138"/>
    </location>
    <ligand>
        <name>L-glutamine</name>
        <dbReference type="ChEBI" id="CHEBI:58359"/>
    </ligand>
</feature>
<feature type="sequence conflict" description="In Ref. 1; AAA73380/CAA90312." evidence="4" ref="1">
    <original>I</original>
    <variation>L</variation>
    <location>
        <position position="49"/>
    </location>
</feature>
<feature type="strand" evidence="6">
    <location>
        <begin position="3"/>
        <end position="8"/>
    </location>
</feature>
<feature type="helix" evidence="6">
    <location>
        <begin position="14"/>
        <end position="23"/>
    </location>
</feature>
<feature type="strand" evidence="6">
    <location>
        <begin position="27"/>
        <end position="32"/>
    </location>
</feature>
<feature type="turn" evidence="6">
    <location>
        <begin position="33"/>
        <end position="35"/>
    </location>
</feature>
<feature type="helix" evidence="6">
    <location>
        <begin position="38"/>
        <end position="44"/>
    </location>
</feature>
<feature type="strand" evidence="6">
    <location>
        <begin position="47"/>
        <end position="51"/>
    </location>
</feature>
<feature type="helix" evidence="6">
    <location>
        <begin position="61"/>
        <end position="64"/>
    </location>
</feature>
<feature type="helix" evidence="6">
    <location>
        <begin position="67"/>
        <end position="74"/>
    </location>
</feature>
<feature type="turn" evidence="6">
    <location>
        <begin position="75"/>
        <end position="77"/>
    </location>
</feature>
<feature type="strand" evidence="6">
    <location>
        <begin position="80"/>
        <end position="83"/>
    </location>
</feature>
<feature type="helix" evidence="6">
    <location>
        <begin position="85"/>
        <end position="93"/>
    </location>
</feature>
<feature type="strand" evidence="6">
    <location>
        <begin position="97"/>
        <end position="114"/>
    </location>
</feature>
<feature type="turn" evidence="6">
    <location>
        <begin position="122"/>
        <end position="125"/>
    </location>
</feature>
<feature type="strand" evidence="6">
    <location>
        <begin position="128"/>
        <end position="141"/>
    </location>
</feature>
<feature type="strand" evidence="6">
    <location>
        <begin position="147"/>
        <end position="156"/>
    </location>
</feature>
<feature type="strand" evidence="6">
    <location>
        <begin position="159"/>
        <end position="175"/>
    </location>
</feature>
<feature type="helix" evidence="6">
    <location>
        <begin position="184"/>
        <end position="194"/>
    </location>
</feature>
<proteinExistence type="evidence at protein level"/>
<keyword id="KW-0002">3D-structure</keyword>
<keyword id="KW-0028">Amino-acid biosynthesis</keyword>
<keyword id="KW-0057">Aromatic amino acid biosynthesis</keyword>
<keyword id="KW-0315">Glutamine amidotransferase</keyword>
<keyword id="KW-0456">Lyase</keyword>
<keyword id="KW-1185">Reference proteome</keyword>
<keyword id="KW-0822">Tryptophan biosynthesis</keyword>
<sequence>MDLTLIIDNYDSFVYNIAQIVGELGSYPIVIRNDEISIKGIERIDPDRIIISPGPGTPEKREDIGVSLDVIKYLGKRTPILGVCLGHQAIGYAFGAKIRRARKVFHGKISNIILVNNSPLSLYYGIAKEFKATRYHSLVVDEVHRPLIVDAISAEDNEIMAIHHEEYPIYGVQFHPESVGTSLGYKILYNFLNRV</sequence>